<feature type="signal peptide" evidence="3">
    <location>
        <begin position="1"/>
        <end position="21"/>
    </location>
</feature>
<feature type="chain" id="PRO_0000018012" description="Uncharacterized lipoprotein PF1695">
    <location>
        <begin position="22"/>
        <end position="398"/>
    </location>
</feature>
<feature type="modified residue" description="N-acetylcysteine" evidence="1">
    <location>
        <position position="22"/>
    </location>
</feature>
<feature type="lipid moiety-binding region" description="S-archaeol cysteine" evidence="1">
    <location>
        <position position="22"/>
    </location>
</feature>
<comment type="subcellular location">
    <subcellularLocation>
        <location evidence="2">Cell membrane</location>
        <topology evidence="2">Lipid-anchor</topology>
    </subcellularLocation>
</comment>
<comment type="similarity">
    <text evidence="3">Belongs to the BMP lipoprotein family.</text>
</comment>
<dbReference type="EMBL" id="AE009950">
    <property type="protein sequence ID" value="AAL81819.1"/>
    <property type="molecule type" value="Genomic_DNA"/>
</dbReference>
<dbReference type="RefSeq" id="WP_011012841.1">
    <property type="nucleotide sequence ID" value="NZ_CP023154.1"/>
</dbReference>
<dbReference type="SMR" id="Q8U0A4"/>
<dbReference type="STRING" id="186497.PF1695"/>
<dbReference type="PaxDb" id="186497-PF1695"/>
<dbReference type="KEGG" id="pfu:PF1695"/>
<dbReference type="PATRIC" id="fig|186497.12.peg.1763"/>
<dbReference type="eggNOG" id="arCOG00258">
    <property type="taxonomic scope" value="Archaea"/>
</dbReference>
<dbReference type="HOGENOM" id="CLU_038813_0_0_2"/>
<dbReference type="OrthoDB" id="26626at2157"/>
<dbReference type="PhylomeDB" id="Q8U0A4"/>
<dbReference type="Proteomes" id="UP000001013">
    <property type="component" value="Chromosome"/>
</dbReference>
<dbReference type="GO" id="GO:0005886">
    <property type="term" value="C:plasma membrane"/>
    <property type="evidence" value="ECO:0007669"/>
    <property type="project" value="UniProtKB-SubCell"/>
</dbReference>
<dbReference type="CDD" id="cd06354">
    <property type="entry name" value="PBP1_PrnA-like"/>
    <property type="match status" value="1"/>
</dbReference>
<dbReference type="Gene3D" id="3.40.50.2300">
    <property type="match status" value="2"/>
</dbReference>
<dbReference type="InterPro" id="IPR050957">
    <property type="entry name" value="BMP_lipoprotein"/>
</dbReference>
<dbReference type="InterPro" id="IPR028082">
    <property type="entry name" value="Peripla_BP_I"/>
</dbReference>
<dbReference type="InterPro" id="IPR003760">
    <property type="entry name" value="PnrA-like"/>
</dbReference>
<dbReference type="PANTHER" id="PTHR34296:SF2">
    <property type="entry name" value="ABC TRANSPORTER GUANOSINE-BINDING PROTEIN NUPN"/>
    <property type="match status" value="1"/>
</dbReference>
<dbReference type="PANTHER" id="PTHR34296">
    <property type="entry name" value="TRANSCRIPTIONAL ACTIVATOR PROTEIN MED"/>
    <property type="match status" value="1"/>
</dbReference>
<dbReference type="Pfam" id="PF02608">
    <property type="entry name" value="Bmp"/>
    <property type="match status" value="1"/>
</dbReference>
<dbReference type="SUPFAM" id="SSF53822">
    <property type="entry name" value="Periplasmic binding protein-like I"/>
    <property type="match status" value="1"/>
</dbReference>
<dbReference type="PROSITE" id="PS51257">
    <property type="entry name" value="PROKAR_LIPOPROTEIN"/>
    <property type="match status" value="1"/>
</dbReference>
<name>Y1695_PYRFU</name>
<gene>
    <name type="ordered locus">PF1695</name>
</gene>
<protein>
    <recommendedName>
        <fullName>Uncharacterized lipoprotein PF1695</fullName>
    </recommendedName>
</protein>
<organism>
    <name type="scientific">Pyrococcus furiosus (strain ATCC 43587 / DSM 3638 / JCM 8422 / Vc1)</name>
    <dbReference type="NCBI Taxonomy" id="186497"/>
    <lineage>
        <taxon>Archaea</taxon>
        <taxon>Methanobacteriati</taxon>
        <taxon>Methanobacteriota</taxon>
        <taxon>Thermococci</taxon>
        <taxon>Thermococcales</taxon>
        <taxon>Thermococcaceae</taxon>
        <taxon>Pyrococcus</taxon>
    </lineage>
</organism>
<proteinExistence type="inferred from homology"/>
<keyword id="KW-0007">Acetylation</keyword>
<keyword id="KW-1003">Cell membrane</keyword>
<keyword id="KW-0449">Lipoprotein</keyword>
<keyword id="KW-0472">Membrane</keyword>
<keyword id="KW-1185">Reference proteome</keyword>
<keyword id="KW-0732">Signal</keyword>
<sequence length="398" mass="44202">MRKVGITLSVVALVIMGFVAGCIGGTQTQGEKVKVAVLFDVGGRGDLSFNDMAYLGAERAKKELGVEVEYMTPKSREDMVPLLKQLAESKEYDLLVLIGFLWTTPLDQVADQYPDQKFALIDSTTGKVRENEVDILFREQEAAALIGVIASGMAYELGGDTIGAVAGMDIPPLWKFHIGYLYGAKYFEKKTGKPVKLLWQYTGTFTDTQVGYTTGMQLLQQGAKVLYGLAGLTHVGMFDAVIDWNKQGKGKALAIGQDASQEWYAPEYIPISGAKRVDVAVYTAIEMVVKNQWKGGIMTLGLKEGGVGYWNLDGVRQFAEFAQEGGKLKDMTPEDVVRIVKEQREKYIKPEVWEIVRELEEKIKNGEIKFKTPQSHDEYEQIIKELEKGNLDAALEKE</sequence>
<accession>Q8U0A4</accession>
<reference key="1">
    <citation type="journal article" date="1999" name="Genetics">
        <title>Divergence of the hyperthermophilic archaea Pyrococcus furiosus and P. horikoshii inferred from complete genomic sequences.</title>
        <authorList>
            <person name="Maeder D.L."/>
            <person name="Weiss R.B."/>
            <person name="Dunn D.M."/>
            <person name="Cherry J.L."/>
            <person name="Gonzalez J.M."/>
            <person name="DiRuggiero J."/>
            <person name="Robb F.T."/>
        </authorList>
    </citation>
    <scope>NUCLEOTIDE SEQUENCE [LARGE SCALE GENOMIC DNA]</scope>
    <source>
        <strain>ATCC 43587 / DSM 3638 / JCM 8422 / Vc1</strain>
    </source>
</reference>
<evidence type="ECO:0000255" key="1"/>
<evidence type="ECO:0000255" key="2">
    <source>
        <dbReference type="PROSITE-ProRule" id="PRU00303"/>
    </source>
</evidence>
<evidence type="ECO:0000305" key="3"/>